<accession>B7NU33</accession>
<dbReference type="EC" id="5.1.1.3" evidence="1"/>
<dbReference type="EMBL" id="CU928164">
    <property type="protein sequence ID" value="CAR19141.1"/>
    <property type="molecule type" value="Genomic_DNA"/>
</dbReference>
<dbReference type="RefSeq" id="WP_000201825.1">
    <property type="nucleotide sequence ID" value="NC_011750.1"/>
</dbReference>
<dbReference type="RefSeq" id="YP_002408952.1">
    <property type="nucleotide sequence ID" value="NC_011750.1"/>
</dbReference>
<dbReference type="SMR" id="B7NU33"/>
<dbReference type="STRING" id="585057.ECIAI39_3022"/>
<dbReference type="KEGG" id="ect:ECIAI39_3022"/>
<dbReference type="PATRIC" id="fig|585057.6.peg.3134"/>
<dbReference type="HOGENOM" id="CLU_052344_2_0_6"/>
<dbReference type="UniPathway" id="UPA00219"/>
<dbReference type="Proteomes" id="UP000000749">
    <property type="component" value="Chromosome"/>
</dbReference>
<dbReference type="GO" id="GO:0008881">
    <property type="term" value="F:glutamate racemase activity"/>
    <property type="evidence" value="ECO:0007669"/>
    <property type="project" value="UniProtKB-UniRule"/>
</dbReference>
<dbReference type="GO" id="GO:0071555">
    <property type="term" value="P:cell wall organization"/>
    <property type="evidence" value="ECO:0007669"/>
    <property type="project" value="UniProtKB-KW"/>
</dbReference>
<dbReference type="GO" id="GO:0009252">
    <property type="term" value="P:peptidoglycan biosynthetic process"/>
    <property type="evidence" value="ECO:0007669"/>
    <property type="project" value="UniProtKB-UniRule"/>
</dbReference>
<dbReference type="GO" id="GO:0008360">
    <property type="term" value="P:regulation of cell shape"/>
    <property type="evidence" value="ECO:0007669"/>
    <property type="project" value="UniProtKB-KW"/>
</dbReference>
<dbReference type="FunFam" id="3.40.50.1860:FF:000002">
    <property type="entry name" value="Glutamate racemase"/>
    <property type="match status" value="1"/>
</dbReference>
<dbReference type="Gene3D" id="3.40.50.1860">
    <property type="match status" value="2"/>
</dbReference>
<dbReference type="HAMAP" id="MF_00258">
    <property type="entry name" value="Glu_racemase"/>
    <property type="match status" value="1"/>
</dbReference>
<dbReference type="InterPro" id="IPR015942">
    <property type="entry name" value="Asp/Glu/hydantoin_racemase"/>
</dbReference>
<dbReference type="InterPro" id="IPR001920">
    <property type="entry name" value="Asp/Glu_race"/>
</dbReference>
<dbReference type="InterPro" id="IPR018187">
    <property type="entry name" value="Asp/Glu_racemase_AS_1"/>
</dbReference>
<dbReference type="InterPro" id="IPR033134">
    <property type="entry name" value="Asp/Glu_racemase_AS_2"/>
</dbReference>
<dbReference type="InterPro" id="IPR004391">
    <property type="entry name" value="Glu_race"/>
</dbReference>
<dbReference type="NCBIfam" id="TIGR00067">
    <property type="entry name" value="glut_race"/>
    <property type="match status" value="1"/>
</dbReference>
<dbReference type="NCBIfam" id="NF002034">
    <property type="entry name" value="PRK00865.1-1"/>
    <property type="match status" value="1"/>
</dbReference>
<dbReference type="PANTHER" id="PTHR21198">
    <property type="entry name" value="GLUTAMATE RACEMASE"/>
    <property type="match status" value="1"/>
</dbReference>
<dbReference type="PANTHER" id="PTHR21198:SF2">
    <property type="entry name" value="GLUTAMATE RACEMASE"/>
    <property type="match status" value="1"/>
</dbReference>
<dbReference type="Pfam" id="PF01177">
    <property type="entry name" value="Asp_Glu_race"/>
    <property type="match status" value="1"/>
</dbReference>
<dbReference type="SUPFAM" id="SSF53681">
    <property type="entry name" value="Aspartate/glutamate racemase"/>
    <property type="match status" value="2"/>
</dbReference>
<dbReference type="PROSITE" id="PS00923">
    <property type="entry name" value="ASP_GLU_RACEMASE_1"/>
    <property type="match status" value="1"/>
</dbReference>
<dbReference type="PROSITE" id="PS00924">
    <property type="entry name" value="ASP_GLU_RACEMASE_2"/>
    <property type="match status" value="1"/>
</dbReference>
<protein>
    <recommendedName>
        <fullName evidence="1">Glutamate racemase</fullName>
        <ecNumber evidence="1">5.1.1.3</ecNumber>
    </recommendedName>
</protein>
<gene>
    <name evidence="1" type="primary">murI</name>
    <name type="ordered locus">ECIAI39_3022</name>
</gene>
<feature type="chain" id="PRO_1000119186" description="Glutamate racemase">
    <location>
        <begin position="1"/>
        <end position="285"/>
    </location>
</feature>
<feature type="active site" description="Proton donor/acceptor" evidence="1">
    <location>
        <position position="92"/>
    </location>
</feature>
<feature type="active site" description="Proton donor/acceptor" evidence="1">
    <location>
        <position position="204"/>
    </location>
</feature>
<feature type="binding site" evidence="1">
    <location>
        <begin position="28"/>
        <end position="29"/>
    </location>
    <ligand>
        <name>substrate</name>
    </ligand>
</feature>
<feature type="binding site" evidence="1">
    <location>
        <begin position="60"/>
        <end position="61"/>
    </location>
    <ligand>
        <name>substrate</name>
    </ligand>
</feature>
<feature type="binding site" evidence="1">
    <location>
        <begin position="93"/>
        <end position="94"/>
    </location>
    <ligand>
        <name>substrate</name>
    </ligand>
</feature>
<feature type="binding site" evidence="1">
    <location>
        <begin position="205"/>
        <end position="206"/>
    </location>
    <ligand>
        <name>substrate</name>
    </ligand>
</feature>
<reference key="1">
    <citation type="journal article" date="2009" name="PLoS Genet.">
        <title>Organised genome dynamics in the Escherichia coli species results in highly diverse adaptive paths.</title>
        <authorList>
            <person name="Touchon M."/>
            <person name="Hoede C."/>
            <person name="Tenaillon O."/>
            <person name="Barbe V."/>
            <person name="Baeriswyl S."/>
            <person name="Bidet P."/>
            <person name="Bingen E."/>
            <person name="Bonacorsi S."/>
            <person name="Bouchier C."/>
            <person name="Bouvet O."/>
            <person name="Calteau A."/>
            <person name="Chiapello H."/>
            <person name="Clermont O."/>
            <person name="Cruveiller S."/>
            <person name="Danchin A."/>
            <person name="Diard M."/>
            <person name="Dossat C."/>
            <person name="Karoui M.E."/>
            <person name="Frapy E."/>
            <person name="Garry L."/>
            <person name="Ghigo J.M."/>
            <person name="Gilles A.M."/>
            <person name="Johnson J."/>
            <person name="Le Bouguenec C."/>
            <person name="Lescat M."/>
            <person name="Mangenot S."/>
            <person name="Martinez-Jehanne V."/>
            <person name="Matic I."/>
            <person name="Nassif X."/>
            <person name="Oztas S."/>
            <person name="Petit M.A."/>
            <person name="Pichon C."/>
            <person name="Rouy Z."/>
            <person name="Ruf C.S."/>
            <person name="Schneider D."/>
            <person name="Tourret J."/>
            <person name="Vacherie B."/>
            <person name="Vallenet D."/>
            <person name="Medigue C."/>
            <person name="Rocha E.P.C."/>
            <person name="Denamur E."/>
        </authorList>
    </citation>
    <scope>NUCLEOTIDE SEQUENCE [LARGE SCALE GENOMIC DNA]</scope>
    <source>
        <strain>IAI39 / ExPEC</strain>
    </source>
</reference>
<keyword id="KW-0133">Cell shape</keyword>
<keyword id="KW-0961">Cell wall biogenesis/degradation</keyword>
<keyword id="KW-0413">Isomerase</keyword>
<keyword id="KW-0573">Peptidoglycan synthesis</keyword>
<evidence type="ECO:0000255" key="1">
    <source>
        <dbReference type="HAMAP-Rule" id="MF_00258"/>
    </source>
</evidence>
<organism>
    <name type="scientific">Escherichia coli O7:K1 (strain IAI39 / ExPEC)</name>
    <dbReference type="NCBI Taxonomy" id="585057"/>
    <lineage>
        <taxon>Bacteria</taxon>
        <taxon>Pseudomonadati</taxon>
        <taxon>Pseudomonadota</taxon>
        <taxon>Gammaproteobacteria</taxon>
        <taxon>Enterobacterales</taxon>
        <taxon>Enterobacteriaceae</taxon>
        <taxon>Escherichia</taxon>
    </lineage>
</organism>
<proteinExistence type="inferred from homology"/>
<name>MURI_ECO7I</name>
<comment type="function">
    <text evidence="1">Provides the (R)-glutamate required for cell wall biosynthesis.</text>
</comment>
<comment type="catalytic activity">
    <reaction evidence="1">
        <text>L-glutamate = D-glutamate</text>
        <dbReference type="Rhea" id="RHEA:12813"/>
        <dbReference type="ChEBI" id="CHEBI:29985"/>
        <dbReference type="ChEBI" id="CHEBI:29986"/>
        <dbReference type="EC" id="5.1.1.3"/>
    </reaction>
</comment>
<comment type="pathway">
    <text evidence="1">Cell wall biogenesis; peptidoglycan biosynthesis.</text>
</comment>
<comment type="similarity">
    <text evidence="1">Belongs to the aspartate/glutamate racemases family.</text>
</comment>
<sequence>MATKLQDGNTPCLAATPSEPRPTVLVFDSGVGGLSVYDEIRHLLPDLHYIYAFDNVAFPYGEKSEAFIVERVVAIVTAVQKRYPLALAVVACNTASTVSLPALREKFDFPVVGVVPAIKPAARLTANGIVGLLATRGTVKRSYTHELIARFANECQIEMLGSAEMVELAEAKLHGEDVSLDALKRILRPWLRMKEPPDTVVLGCTHFPLLQEELLQVLPEGTRLVDSGAAIARRTAWLLEHEAPDAKSADANIAFCMAMTPEAEQLLPVLQRYGFETLEKLAVLG</sequence>